<reference key="1">
    <citation type="journal article" date="1999" name="Biochim. Biophys. Acta">
        <title>cDNA cloning, genomic structure and chromosomal localization of the human BUP-1 gene encoding beta-ureidopropionase.</title>
        <authorList>
            <person name="Vreken P."/>
            <person name="van Kuilenburg A.B.P."/>
            <person name="Hamajima N."/>
            <person name="Meinsma R."/>
            <person name="van Lenthe H."/>
            <person name="Goehlich-Ratmann G."/>
            <person name="Assmann B.E."/>
            <person name="Wevers R.A."/>
            <person name="van Gennip A.H."/>
        </authorList>
    </citation>
    <scope>NUCLEOTIDE SEQUENCE [GENOMIC DNA / MRNA]</scope>
    <scope>FUNCTION</scope>
    <scope>CATALYTIC ACTIVITY</scope>
    <scope>PATHWAY</scope>
</reference>
<reference key="2">
    <citation type="journal article" date="2001" name="J. Nutr. Sci. Vitaminol.">
        <title>Expression and properties of human liver beta-ureidopropionase.</title>
        <authorList>
            <person name="Sakamoto T."/>
            <person name="Sakata S.F."/>
            <person name="Matsuda K."/>
            <person name="Horikawa Y."/>
            <person name="Tamaki N."/>
        </authorList>
    </citation>
    <scope>NUCLEOTIDE SEQUENCE [MRNA]</scope>
    <scope>FUNCTION</scope>
    <scope>CATALYTIC ACTIVITY</scope>
    <scope>PATHWAY</scope>
    <scope>ZINC-BINDING</scope>
    <source>
        <tissue>Liver</tissue>
    </source>
</reference>
<reference key="3">
    <citation type="journal article" date="2004" name="Genome Biol.">
        <title>A genome annotation-driven approach to cloning the human ORFeome.</title>
        <authorList>
            <person name="Collins J.E."/>
            <person name="Wright C.L."/>
            <person name="Edwards C.A."/>
            <person name="Davis M.P."/>
            <person name="Grinham J.A."/>
            <person name="Cole C.G."/>
            <person name="Goward M.E."/>
            <person name="Aguado B."/>
            <person name="Mallya M."/>
            <person name="Mokrab Y."/>
            <person name="Huckle E.J."/>
            <person name="Beare D.M."/>
            <person name="Dunham I."/>
        </authorList>
    </citation>
    <scope>NUCLEOTIDE SEQUENCE [LARGE SCALE MRNA]</scope>
</reference>
<reference key="4">
    <citation type="submission" date="2005-07" db="EMBL/GenBank/DDBJ databases">
        <authorList>
            <person name="Mural R.J."/>
            <person name="Istrail S."/>
            <person name="Sutton G.G."/>
            <person name="Florea L."/>
            <person name="Halpern A.L."/>
            <person name="Mobarry C.M."/>
            <person name="Lippert R."/>
            <person name="Walenz B."/>
            <person name="Shatkay H."/>
            <person name="Dew I."/>
            <person name="Miller J.R."/>
            <person name="Flanigan M.J."/>
            <person name="Edwards N.J."/>
            <person name="Bolanos R."/>
            <person name="Fasulo D."/>
            <person name="Halldorsson B.V."/>
            <person name="Hannenhalli S."/>
            <person name="Turner R."/>
            <person name="Yooseph S."/>
            <person name="Lu F."/>
            <person name="Nusskern D.R."/>
            <person name="Shue B.C."/>
            <person name="Zheng X.H."/>
            <person name="Zhong F."/>
            <person name="Delcher A.L."/>
            <person name="Huson D.H."/>
            <person name="Kravitz S.A."/>
            <person name="Mouchard L."/>
            <person name="Reinert K."/>
            <person name="Remington K.A."/>
            <person name="Clark A.G."/>
            <person name="Waterman M.S."/>
            <person name="Eichler E.E."/>
            <person name="Adams M.D."/>
            <person name="Hunkapiller M.W."/>
            <person name="Myers E.W."/>
            <person name="Venter J.C."/>
        </authorList>
    </citation>
    <scope>NUCLEOTIDE SEQUENCE [LARGE SCALE GENOMIC DNA]</scope>
</reference>
<reference key="5">
    <citation type="journal article" date="2004" name="Genome Res.">
        <title>The status, quality, and expansion of the NIH full-length cDNA project: the Mammalian Gene Collection (MGC).</title>
        <authorList>
            <consortium name="The MGC Project Team"/>
        </authorList>
    </citation>
    <scope>NUCLEOTIDE SEQUENCE [LARGE SCALE MRNA]</scope>
</reference>
<reference key="6">
    <citation type="journal article" date="1999" name="Anal. Biochem.">
        <title>A radiochemical assay for beta-ureidopropionase using radiolabeled N-carbamyl-beta-alanine obtained via hydrolysis of [2-(14)C]5, 6-dihydrouracil.</title>
        <authorList>
            <person name="Van Kuilenburg A.B."/>
            <person name="Van Lenthe H."/>
            <person name="Van Gennip A.H."/>
        </authorList>
    </citation>
    <scope>FUNCTION</scope>
    <scope>CATALYTIC ACTIVITY</scope>
    <scope>BIOPHYSICOCHEMICAL PROPERTIES</scope>
    <scope>PATHWAY</scope>
</reference>
<reference key="7">
    <citation type="journal article" date="2014" name="J. Proteomics">
        <title>An enzyme assisted RP-RPLC approach for in-depth analysis of human liver phosphoproteome.</title>
        <authorList>
            <person name="Bian Y."/>
            <person name="Song C."/>
            <person name="Cheng K."/>
            <person name="Dong M."/>
            <person name="Wang F."/>
            <person name="Huang J."/>
            <person name="Sun D."/>
            <person name="Wang L."/>
            <person name="Ye M."/>
            <person name="Zou H."/>
        </authorList>
    </citation>
    <scope>IDENTIFICATION BY MASS SPECTROMETRY [LARGE SCALE ANALYSIS]</scope>
    <source>
        <tissue>Liver</tissue>
    </source>
</reference>
<reference key="8">
    <citation type="journal article" date="2018" name="Biochem. J.">
        <title>Crystal structure and pH-dependent allosteric regulation of human beta-ureidopropionase, an enzyme involved in anticancer drug metabolism.</title>
        <authorList>
            <person name="Maurer D."/>
            <person name="Lohkamp B."/>
            <person name="Krumpel M."/>
            <person name="Widersten M."/>
            <person name="Dobritzsch D."/>
        </authorList>
    </citation>
    <scope>X-RAY CRYSTALLOGRAPHY (2.08 ANGSTROMS) OF MUTANT CYS-299</scope>
    <scope>FUNCTION</scope>
    <scope>CATALYTIC ACTIVITY</scope>
    <scope>PATHWAY</scope>
    <scope>BIOPHYSICOCHEMICAL PROPERTIES</scope>
    <scope>ACTIVITY REGULATION</scope>
    <scope>SUBUNIT</scope>
    <scope>LACK OF ZINC BINDING</scope>
    <scope>ACTIVE SITE</scope>
    <scope>MUTAGENESIS OF ARG-130; LYS-132; SER-208; CYS-233 AND THR-299</scope>
</reference>
<reference key="9">
    <citation type="journal article" date="2004" name="Hum. Mol. Genet.">
        <title>Beta-ureidopropionase deficiency: an inborn error of pyrimidine degradation associated with neurological abnormalities.</title>
        <authorList>
            <person name="van Kuilenburg A.B.P."/>
            <person name="Meinsma R."/>
            <person name="Beke E."/>
            <person name="Assmann B."/>
            <person name="Ribes A."/>
            <person name="Lorente I."/>
            <person name="Busch R."/>
            <person name="Mayatepek E."/>
            <person name="Abeling N.G.G.M."/>
            <person name="van Cruchten A."/>
            <person name="Stroomer A.E.M."/>
            <person name="van Lenthe H."/>
            <person name="Zoetekouw L."/>
            <person name="Kulik W."/>
            <person name="Hoffmann G.F."/>
            <person name="Voit T."/>
            <person name="Wevers R.A."/>
            <person name="Rutsch F."/>
            <person name="van Gennip A.H."/>
        </authorList>
    </citation>
    <scope>VARIANT UPB1D GLU-85</scope>
    <scope>CHARACTERIZATION OF VARIANT UPB1D GLU-85</scope>
</reference>
<reference key="10">
    <citation type="journal article" date="2012" name="Biochim. Biophys. Acta">
        <title>Beta-ureidopropionase deficiency: phenotype, genotype and protein structural consequences in 16 patients.</title>
        <authorList>
            <person name="van Kuilenburg A.B."/>
            <person name="Dobritzsch D."/>
            <person name="Meijer J."/>
            <person name="Krumpel M."/>
            <person name="Selim L.A."/>
            <person name="Rashed M.S."/>
            <person name="Assmann B."/>
            <person name="Meinsma R."/>
            <person name="Lohkamp B."/>
            <person name="Ito T."/>
            <person name="Abeling N.G."/>
            <person name="Saito K."/>
            <person name="Eto K."/>
            <person name="Smitka M."/>
            <person name="Engvall M."/>
            <person name="Zhang C."/>
            <person name="Xu W."/>
            <person name="Zoetekouw L."/>
            <person name="Hennekam R.C."/>
        </authorList>
    </citation>
    <scope>VARIANTS UPB1D SER-13; ARG-235; TRP-236; ARG-264; GLN-326 AND MET-359</scope>
    <scope>CHARACTERIZATION OF VARIANTS UPB1D SER-13; ARG-235; ARG-264; GLN-326; TRP-326 AND MET-359</scope>
    <scope>FUNCTION</scope>
    <scope>CATALYTIC ACTIVITY</scope>
    <scope>PATHWAY</scope>
    <scope>SUBUNIT</scope>
    <scope>TISSUE SPECIFICITY</scope>
</reference>
<reference key="11">
    <citation type="journal article" date="2014" name="J. Inherit. Metab. Dis.">
        <title>Clinical, biochemical and molecular analysis of 13 Japanese patients with beta-ureidopropionase deficiency demonstrates high prevalence of the c.977G &gt; A (p.R326Q) mutation [corrected].</title>
        <authorList>
            <person name="Nakajima Y."/>
            <person name="Meijer J."/>
            <person name="Dobritzsch D."/>
            <person name="Ito T."/>
            <person name="Meinsma R."/>
            <person name="Abeling N.G."/>
            <person name="Roelofsen J."/>
            <person name="Zoetekouw L."/>
            <person name="Watanabe Y."/>
            <person name="Tashiro K."/>
            <person name="Lee T."/>
            <person name="Takeshima Y."/>
            <person name="Mitsubuchi H."/>
            <person name="Yoneyama A."/>
            <person name="Ohta K."/>
            <person name="Eto K."/>
            <person name="Saito K."/>
            <person name="Kuhara T."/>
            <person name="van Kuilenburg A.B."/>
        </authorList>
    </citation>
    <scope>VARIANTS UPB1D SER-13; LYS-271; THR-286 AND GLN-326</scope>
    <scope>CHARACTERIZATION OF VARIANTS UPB1D SER-13; LYS-271; THR-286 AND GLN-326</scope>
    <scope>FUNCTION</scope>
    <scope>CATALYTIC ACTIVITY</scope>
    <scope>PATHWAY</scope>
    <scope>SUBUNIT</scope>
</reference>
<sequence length="384" mass="43166">MAGAEWKSLEECLEKHLPLPDLQEVKRVLYGKELRKLDLPREAFEAASREDFELQGYAFEAAEEQLRRPRIVHVGLVQNRIPLPANAPVAEQVSALHRRIKAIVEVAAMCGVNIICFQEAWTMPFAFCTREKLPWTEFAESAEDGPTTRFCQKLAKNHDMVVVSPILERDSEHGDVLWNTAVVISNSGAVLGKTRKNHIPRVGDFNESTYYMEGNLGHPVFQTQFGRIAVNICYGRHHPLNWLMYSINGAEIIFNPSATIGALSESLWPIEARNAAIANHCFTCAINRVGTEHFPNEFTSGDGKKAHQDFGYFYGSSYVAAPDSSRTPGLSRSRDGLLVAKLDLNLCQQVNDVWNFKMTGRYEMYARELAEAVKSNYSPTIVKE</sequence>
<name>BUP1_HUMAN</name>
<proteinExistence type="evidence at protein level"/>
<protein>
    <recommendedName>
        <fullName>Beta-ureidopropionase</fullName>
        <ecNumber evidence="3 4 5 7 8 9">3.5.1.6</ecNumber>
    </recommendedName>
    <alternativeName>
        <fullName evidence="10">BUP-1</fullName>
    </alternativeName>
    <alternativeName>
        <fullName>Beta-alanine synthase</fullName>
    </alternativeName>
    <alternativeName>
        <fullName>N-carbamoyl-beta-alanine amidohydrolase</fullName>
    </alternativeName>
</protein>
<feature type="chain" id="PRO_0000204051" description="Beta-ureidopropionase">
    <location>
        <begin position="1"/>
        <end position="384"/>
    </location>
</feature>
<feature type="domain" description="CN hydrolase" evidence="2">
    <location>
        <begin position="72"/>
        <end position="344"/>
    </location>
</feature>
<feature type="active site" description="Proton acceptor" evidence="2">
    <location>
        <position position="119"/>
    </location>
</feature>
<feature type="active site" description="Proton donor" evidence="2">
    <location>
        <position position="196"/>
    </location>
</feature>
<feature type="active site" description="Nucleophile" evidence="2 9">
    <location>
        <position position="233"/>
    </location>
</feature>
<feature type="modified residue" description="Phosphoserine" evidence="1">
    <location>
        <position position="378"/>
    </location>
</feature>
<feature type="sequence variant" id="VAR_081207" description="In UPB1D; strongly reduced activity; reduced formation of higher oligomers; dbSNP:rs200688546." evidence="7 8">
    <original>L</original>
    <variation>S</variation>
    <location>
        <position position="13"/>
    </location>
</feature>
<feature type="sequence variant" id="VAR_026752" description="In UPB1D; complete loss of activity; dbSNP:rs34035085." evidence="6">
    <original>A</original>
    <variation>E</variation>
    <location>
        <position position="85"/>
    </location>
</feature>
<feature type="sequence variant" id="VAR_081208" description="In UPB1D; complete loss of activity; dbSNP:rs766196011." evidence="7">
    <original>G</original>
    <variation>R</variation>
    <location>
        <position position="235"/>
    </location>
</feature>
<feature type="sequence variant" id="VAR_081209" description="In UPB1D; complete loss of activity; dbSNP:rs144135211." evidence="7">
    <original>R</original>
    <variation>W</variation>
    <location>
        <position position="236"/>
    </location>
</feature>
<feature type="sequence variant" id="VAR_081210" description="In UPB1D; complete loss of activity; dbSNP:rs145766755." evidence="7">
    <original>S</original>
    <variation>R</variation>
    <location>
        <position position="264"/>
    </location>
</feature>
<feature type="sequence variant" id="VAR_081211" description="In UPB1D; complete loss of activity; abolishes formation of higher oligomers; dbSNP:rs747454154." evidence="8">
    <original>E</original>
    <variation>K</variation>
    <location>
        <position position="271"/>
    </location>
</feature>
<feature type="sequence variant" id="VAR_081212" description="In UPB1D; uncertain significance; mildly reduced enzyme activity; no effect on formation of higher oligomers; dbSNP:rs200034079." evidence="8">
    <original>I</original>
    <variation>T</variation>
    <location>
        <position position="286"/>
    </location>
</feature>
<feature type="sequence variant" id="VAR_081213" description="In UPB1D; complete loss of activity; abolishes formation of higher oligomers; dbSNP:rs118163237." evidence="7 8">
    <original>R</original>
    <variation>Q</variation>
    <location>
        <position position="326"/>
    </location>
</feature>
<feature type="sequence variant" id="VAR_050280" description="In dbSNP:rs34110964.">
    <original>A</original>
    <variation>D</variation>
    <location>
        <position position="340"/>
    </location>
</feature>
<feature type="sequence variant" id="VAR_081214" description="In UPB1D; complete loss of activity; dbSNP:rs369879221." evidence="7">
    <original>T</original>
    <variation>M</variation>
    <location>
        <position position="359"/>
    </location>
</feature>
<feature type="mutagenesis site" description="Loss of catalytic activity." evidence="9">
    <original>R</original>
    <variation>I</variation>
    <location>
        <position position="130"/>
    </location>
</feature>
<feature type="mutagenesis site" description="Loss of catalytic activity. Forms dimers, but no higher oligomers." evidence="9">
    <original>K</original>
    <variation>L</variation>
    <location>
        <position position="132"/>
    </location>
</feature>
<feature type="mutagenesis site" description="Loss of catalytic activity." evidence="9">
    <original>S</original>
    <variation>A</variation>
    <location>
        <position position="208"/>
    </location>
</feature>
<feature type="mutagenesis site" description="Loss of catalytic activity. Forms dimers, but no higher oligomers." evidence="9">
    <original>S</original>
    <variation>C</variation>
    <location>
        <position position="208"/>
    </location>
</feature>
<feature type="mutagenesis site" description="Loss of catalytic activity. Forms dimers, but no higher oligomers." evidence="9">
    <original>S</original>
    <variation>R</variation>
    <location>
        <position position="208"/>
    </location>
</feature>
<feature type="mutagenesis site" description="Loss of catalytic activity." evidence="9">
    <original>C</original>
    <variation>A</variation>
    <location>
        <position position="233"/>
    </location>
</feature>
<feature type="mutagenesis site" description="Loss of catalytic activity. Forms dimers, but no higher oligomers." evidence="9">
    <original>T</original>
    <variation>C</variation>
    <location>
        <position position="299"/>
    </location>
</feature>
<feature type="sequence conflict" description="In Ref. 1; AAF06739." evidence="11" ref="1">
    <original>L</original>
    <variation>LRSL</variation>
    <location>
        <position position="263"/>
    </location>
</feature>
<feature type="helix" evidence="14">
    <location>
        <begin position="41"/>
        <end position="49"/>
    </location>
</feature>
<feature type="strand" evidence="14">
    <location>
        <begin position="53"/>
        <end position="59"/>
    </location>
</feature>
<feature type="strand" evidence="14">
    <location>
        <begin position="71"/>
        <end position="78"/>
    </location>
</feature>
<feature type="helix" evidence="14">
    <location>
        <begin position="89"/>
        <end position="109"/>
    </location>
</feature>
<feature type="strand" evidence="14">
    <location>
        <begin position="113"/>
        <end position="116"/>
    </location>
</feature>
<feature type="turn" evidence="14">
    <location>
        <begin position="119"/>
        <end position="122"/>
    </location>
</feature>
<feature type="helix" evidence="14">
    <location>
        <begin position="135"/>
        <end position="138"/>
    </location>
</feature>
<feature type="turn" evidence="14">
    <location>
        <begin position="142"/>
        <end position="144"/>
    </location>
</feature>
<feature type="helix" evidence="14">
    <location>
        <begin position="146"/>
        <end position="158"/>
    </location>
</feature>
<feature type="strand" evidence="14">
    <location>
        <begin position="161"/>
        <end position="169"/>
    </location>
</feature>
<feature type="helix" evidence="14">
    <location>
        <begin position="171"/>
        <end position="173"/>
    </location>
</feature>
<feature type="strand" evidence="14">
    <location>
        <begin position="177"/>
        <end position="184"/>
    </location>
</feature>
<feature type="strand" evidence="14">
    <location>
        <begin position="190"/>
        <end position="195"/>
    </location>
</feature>
<feature type="strand" evidence="14">
    <location>
        <begin position="221"/>
        <end position="223"/>
    </location>
</feature>
<feature type="strand" evidence="14">
    <location>
        <begin position="226"/>
        <end position="230"/>
    </location>
</feature>
<feature type="helix" evidence="14">
    <location>
        <begin position="233"/>
        <end position="237"/>
    </location>
</feature>
<feature type="helix" evidence="14">
    <location>
        <begin position="239"/>
        <end position="247"/>
    </location>
</feature>
<feature type="strand" evidence="14">
    <location>
        <begin position="251"/>
        <end position="257"/>
    </location>
</feature>
<feature type="helix" evidence="14">
    <location>
        <begin position="262"/>
        <end position="279"/>
    </location>
</feature>
<feature type="strand" evidence="14">
    <location>
        <begin position="281"/>
        <end position="287"/>
    </location>
</feature>
<feature type="strand" evidence="14">
    <location>
        <begin position="289"/>
        <end position="291"/>
    </location>
</feature>
<feature type="helix" evidence="14">
    <location>
        <begin position="296"/>
        <end position="298"/>
    </location>
</feature>
<feature type="strand" evidence="14">
    <location>
        <begin position="318"/>
        <end position="320"/>
    </location>
</feature>
<feature type="strand" evidence="14">
    <location>
        <begin position="332"/>
        <end position="334"/>
    </location>
</feature>
<feature type="strand" evidence="14">
    <location>
        <begin position="336"/>
        <end position="343"/>
    </location>
</feature>
<feature type="helix" evidence="14">
    <location>
        <begin position="346"/>
        <end position="350"/>
    </location>
</feature>
<feature type="turn" evidence="14">
    <location>
        <begin position="351"/>
        <end position="353"/>
    </location>
</feature>
<feature type="helix" evidence="14">
    <location>
        <begin position="356"/>
        <end position="359"/>
    </location>
</feature>
<feature type="helix" evidence="14">
    <location>
        <begin position="362"/>
        <end position="373"/>
    </location>
</feature>
<evidence type="ECO:0000250" key="1">
    <source>
        <dbReference type="UniProtKB" id="Q03248"/>
    </source>
</evidence>
<evidence type="ECO:0000255" key="2">
    <source>
        <dbReference type="PROSITE-ProRule" id="PRU00054"/>
    </source>
</evidence>
<evidence type="ECO:0000269" key="3">
    <source>
    </source>
</evidence>
<evidence type="ECO:0000269" key="4">
    <source>
    </source>
</evidence>
<evidence type="ECO:0000269" key="5">
    <source>
    </source>
</evidence>
<evidence type="ECO:0000269" key="6">
    <source>
    </source>
</evidence>
<evidence type="ECO:0000269" key="7">
    <source>
    </source>
</evidence>
<evidence type="ECO:0000269" key="8">
    <source>
    </source>
</evidence>
<evidence type="ECO:0000269" key="9">
    <source>
    </source>
</evidence>
<evidence type="ECO:0000303" key="10">
    <source>
    </source>
</evidence>
<evidence type="ECO:0000305" key="11"/>
<evidence type="ECO:0000305" key="12">
    <source>
    </source>
</evidence>
<evidence type="ECO:0000305" key="13">
    <source>
    </source>
</evidence>
<evidence type="ECO:0007829" key="14">
    <source>
        <dbReference type="PDB" id="6FTQ"/>
    </source>
</evidence>
<keyword id="KW-0002">3D-structure</keyword>
<keyword id="KW-0963">Cytoplasm</keyword>
<keyword id="KW-0225">Disease variant</keyword>
<keyword id="KW-0378">Hydrolase</keyword>
<keyword id="KW-0597">Phosphoprotein</keyword>
<keyword id="KW-1267">Proteomics identification</keyword>
<keyword id="KW-1185">Reference proteome</keyword>
<accession>Q9UBR1</accession>
<accession>A3KMF8</accession>
<accession>Q9UIR3</accession>
<comment type="function">
    <text evidence="3 4 5 7 8 9 12 13">Catalyzes a late step in pyrimidine degradation (PubMed:22525402, PubMed:24526388). Converts N-carbamoyl-beta-alanine (3-ureidopropanoate) into beta-alanine, ammonia and carbon dioxide (PubMed:10415095, PubMed:10542323, PubMed:11508704, PubMed:22525402, PubMed:24526388, PubMed:29976570). Likewise, converts N-carbamoyl-beta-aminoisobutyrate (3-ureidoisobutyrate) into beta-aminoisobutyrate, ammonia and carbon dioxide (Probable).</text>
</comment>
<comment type="catalytic activity">
    <reaction evidence="3 4 5 7 8 9">
        <text>3-(carbamoylamino)propanoate + H2O + 2 H(+) = beta-alanine + NH4(+) + CO2</text>
        <dbReference type="Rhea" id="RHEA:11184"/>
        <dbReference type="ChEBI" id="CHEBI:11892"/>
        <dbReference type="ChEBI" id="CHEBI:15377"/>
        <dbReference type="ChEBI" id="CHEBI:15378"/>
        <dbReference type="ChEBI" id="CHEBI:16526"/>
        <dbReference type="ChEBI" id="CHEBI:28938"/>
        <dbReference type="ChEBI" id="CHEBI:57966"/>
        <dbReference type="EC" id="3.5.1.6"/>
    </reaction>
    <physiologicalReaction direction="left-to-right" evidence="3 4 5 7 8 9">
        <dbReference type="Rhea" id="RHEA:11185"/>
    </physiologicalReaction>
</comment>
<comment type="catalytic activity">
    <reaction evidence="12 13">
        <text>3-(carbamoylamino)-2-methylpropanoate + H2O + 2 H(+) = (R)-3-amino-2-methylpropanoate + NH4(+) + CO2</text>
        <dbReference type="Rhea" id="RHEA:37339"/>
        <dbReference type="ChEBI" id="CHEBI:15377"/>
        <dbReference type="ChEBI" id="CHEBI:15378"/>
        <dbReference type="ChEBI" id="CHEBI:16526"/>
        <dbReference type="ChEBI" id="CHEBI:28938"/>
        <dbReference type="ChEBI" id="CHEBI:57731"/>
        <dbReference type="ChEBI" id="CHEBI:74414"/>
        <dbReference type="EC" id="3.5.1.6"/>
    </reaction>
    <physiologicalReaction direction="left-to-right" evidence="12 13">
        <dbReference type="Rhea" id="RHEA:37340"/>
    </physiologicalReaction>
</comment>
<comment type="activity regulation">
    <text evidence="9">Strongly inhibited by 50 mM Zn(2+). Not inhibited by EDTA. Competitively inhibited by beta-alanine, 5-aminolevulinic acid (ALA), beta-aminoisobutyrate and 4-ureidobutyrate.</text>
</comment>
<comment type="biophysicochemical properties">
    <kinetics>
        <KM evidence="3">15.5 uM for N-carbamoyl-beta-alanine</KM>
        <KM evidence="9">48 uM for N-carbamoyl-beta-alanine</KM>
        <text evidence="9">kcat is 0.47 sec(-1) with N-carbamoyl-beta-alanine as substrate.</text>
    </kinetics>
    <phDependence>
        <text evidence="9">Optimum pH is 6.5.</text>
    </phDependence>
</comment>
<comment type="pathway">
    <text evidence="3 4 5 7 8 9">Amino-acid biosynthesis; beta-alanine biosynthesis.</text>
</comment>
<comment type="subunit">
    <text evidence="7 8 9">Homodimer, homotetramer, homooctamer; can also form higher homooligomers.</text>
</comment>
<comment type="subcellular location">
    <subcellularLocation>
        <location>Cytoplasm</location>
    </subcellularLocation>
</comment>
<comment type="tissue specificity">
    <text evidence="7">Detected in liver (at protein level).</text>
</comment>
<comment type="disease" evidence="6 7 8">
    <disease id="DI-01276">
        <name>Beta-ureidopropionase deficiency</name>
        <acronym>UPB1D</acronym>
        <description>An inborn error of metabolism due to a defect in pyrimidine degradation. It is characterized by muscular hypotonia, dystonic movements, scoliosis, microcephaly and severe developmental delay. Patients show strongly elevated levels of N-carbamyl-beta-alanine and N-carbamyl-beta-aminoisobutyric acid in plasma, cerebrospinal fluid and urine.</description>
        <dbReference type="MIM" id="613161"/>
    </disease>
    <text>The disease is caused by variants affecting the gene represented in this entry.</text>
</comment>
<comment type="similarity">
    <text evidence="11">Belongs to the carbon-nitrogen hydrolase superfamily. BUP family.</text>
</comment>
<comment type="caution">
    <text evidence="5 9">The purified enzyme was shown to contain 0.5 zinc atoms per subunit, and sequence analysis was used to predict the zinc binding site (PubMed:11508704). The crystal structure indicates a lack of bound zinc ions, and shows that the residues that were predicted to bind zinc are too far apart in space to form a zinc binding site (PubMed:29976570).</text>
</comment>
<dbReference type="EC" id="3.5.1.6" evidence="3 4 5 7 8 9"/>
<dbReference type="EMBL" id="AF163312">
    <property type="protein sequence ID" value="AAF06735.1"/>
    <property type="molecule type" value="mRNA"/>
</dbReference>
<dbReference type="EMBL" id="AF169559">
    <property type="protein sequence ID" value="AAF06739.1"/>
    <property type="molecule type" value="Genomic_DNA"/>
</dbReference>
<dbReference type="EMBL" id="AF169550">
    <property type="protein sequence ID" value="AAF06739.1"/>
    <property type="status" value="JOINED"/>
    <property type="molecule type" value="Genomic_DNA"/>
</dbReference>
<dbReference type="EMBL" id="AF169551">
    <property type="protein sequence ID" value="AAF06739.1"/>
    <property type="status" value="JOINED"/>
    <property type="molecule type" value="Genomic_DNA"/>
</dbReference>
<dbReference type="EMBL" id="AF169552">
    <property type="protein sequence ID" value="AAF06739.1"/>
    <property type="status" value="JOINED"/>
    <property type="molecule type" value="Genomic_DNA"/>
</dbReference>
<dbReference type="EMBL" id="AF169553">
    <property type="protein sequence ID" value="AAF06739.1"/>
    <property type="status" value="JOINED"/>
    <property type="molecule type" value="Genomic_DNA"/>
</dbReference>
<dbReference type="EMBL" id="AF169554">
    <property type="protein sequence ID" value="AAF06739.1"/>
    <property type="status" value="JOINED"/>
    <property type="molecule type" value="Genomic_DNA"/>
</dbReference>
<dbReference type="EMBL" id="AF169555">
    <property type="protein sequence ID" value="AAF06739.1"/>
    <property type="status" value="JOINED"/>
    <property type="molecule type" value="Genomic_DNA"/>
</dbReference>
<dbReference type="EMBL" id="AF169556">
    <property type="protein sequence ID" value="AAF06739.1"/>
    <property type="status" value="JOINED"/>
    <property type="molecule type" value="Genomic_DNA"/>
</dbReference>
<dbReference type="EMBL" id="AF169557">
    <property type="protein sequence ID" value="AAF06739.1"/>
    <property type="status" value="JOINED"/>
    <property type="molecule type" value="Genomic_DNA"/>
</dbReference>
<dbReference type="EMBL" id="AF169558">
    <property type="protein sequence ID" value="AAF06739.1"/>
    <property type="status" value="JOINED"/>
    <property type="molecule type" value="Genomic_DNA"/>
</dbReference>
<dbReference type="EMBL" id="AB013885">
    <property type="protein sequence ID" value="BAA88634.1"/>
    <property type="molecule type" value="mRNA"/>
</dbReference>
<dbReference type="EMBL" id="CR456375">
    <property type="protein sequence ID" value="CAG30261.1"/>
    <property type="molecule type" value="mRNA"/>
</dbReference>
<dbReference type="EMBL" id="CH471095">
    <property type="protein sequence ID" value="EAW59663.1"/>
    <property type="molecule type" value="Genomic_DNA"/>
</dbReference>
<dbReference type="EMBL" id="BC131703">
    <property type="protein sequence ID" value="AAI31704.1"/>
    <property type="molecule type" value="mRNA"/>
</dbReference>
<dbReference type="CCDS" id="CCDS13827.1"/>
<dbReference type="RefSeq" id="NP_057411.1">
    <property type="nucleotide sequence ID" value="NM_016327.3"/>
</dbReference>
<dbReference type="PDB" id="6FTQ">
    <property type="method" value="X-ray"/>
    <property type="resolution" value="2.08 A"/>
    <property type="chains" value="A=1-384"/>
</dbReference>
<dbReference type="PDB" id="8PT4">
    <property type="method" value="EM"/>
    <property type="resolution" value="3.33 A"/>
    <property type="chains" value="A/B/C/D=1-384"/>
</dbReference>
<dbReference type="PDBsum" id="6FTQ"/>
<dbReference type="PDBsum" id="8PT4"/>
<dbReference type="EMDB" id="EMD-17867"/>
<dbReference type="SMR" id="Q9UBR1"/>
<dbReference type="BioGRID" id="119703">
    <property type="interactions" value="1"/>
</dbReference>
<dbReference type="FunCoup" id="Q9UBR1">
    <property type="interactions" value="296"/>
</dbReference>
<dbReference type="STRING" id="9606.ENSP00000324343"/>
<dbReference type="ChEMBL" id="CHEMBL3430874"/>
<dbReference type="iPTMnet" id="Q9UBR1"/>
<dbReference type="PhosphoSitePlus" id="Q9UBR1"/>
<dbReference type="BioMuta" id="UPB1"/>
<dbReference type="DMDM" id="17373540"/>
<dbReference type="jPOST" id="Q9UBR1"/>
<dbReference type="MassIVE" id="Q9UBR1"/>
<dbReference type="PaxDb" id="9606-ENSP00000324343"/>
<dbReference type="PeptideAtlas" id="Q9UBR1"/>
<dbReference type="ProteomicsDB" id="84035"/>
<dbReference type="Antibodypedia" id="252">
    <property type="antibodies" value="97 antibodies from 24 providers"/>
</dbReference>
<dbReference type="DNASU" id="51733"/>
<dbReference type="Ensembl" id="ENST00000326010.10">
    <property type="protein sequence ID" value="ENSP00000324343.5"/>
    <property type="gene ID" value="ENSG00000100024.15"/>
</dbReference>
<dbReference type="GeneID" id="51733"/>
<dbReference type="KEGG" id="hsa:51733"/>
<dbReference type="MANE-Select" id="ENST00000326010.10">
    <property type="protein sequence ID" value="ENSP00000324343.5"/>
    <property type="RefSeq nucleotide sequence ID" value="NM_016327.3"/>
    <property type="RefSeq protein sequence ID" value="NP_057411.1"/>
</dbReference>
<dbReference type="UCSC" id="uc003aaf.4">
    <property type="organism name" value="human"/>
</dbReference>
<dbReference type="AGR" id="HGNC:16297"/>
<dbReference type="CTD" id="51733"/>
<dbReference type="DisGeNET" id="51733"/>
<dbReference type="GeneCards" id="UPB1"/>
<dbReference type="HGNC" id="HGNC:16297">
    <property type="gene designation" value="UPB1"/>
</dbReference>
<dbReference type="HPA" id="ENSG00000100024">
    <property type="expression patterns" value="Tissue enriched (liver)"/>
</dbReference>
<dbReference type="MalaCards" id="UPB1"/>
<dbReference type="MIM" id="606673">
    <property type="type" value="gene"/>
</dbReference>
<dbReference type="MIM" id="613161">
    <property type="type" value="phenotype"/>
</dbReference>
<dbReference type="neXtProt" id="NX_Q9UBR1"/>
<dbReference type="OpenTargets" id="ENSG00000100024"/>
<dbReference type="Orphanet" id="65287">
    <property type="disease" value="Beta-ureidopropionase deficiency"/>
</dbReference>
<dbReference type="PharmGKB" id="PA418"/>
<dbReference type="VEuPathDB" id="HostDB:ENSG00000100024"/>
<dbReference type="eggNOG" id="KOG0808">
    <property type="taxonomic scope" value="Eukaryota"/>
</dbReference>
<dbReference type="GeneTree" id="ENSGT00390000004906"/>
<dbReference type="HOGENOM" id="CLU_030130_4_1_1"/>
<dbReference type="InParanoid" id="Q9UBR1"/>
<dbReference type="OMA" id="HWPFLRD"/>
<dbReference type="OrthoDB" id="412018at2759"/>
<dbReference type="PAN-GO" id="Q9UBR1">
    <property type="GO annotations" value="2 GO annotations based on evolutionary models"/>
</dbReference>
<dbReference type="PhylomeDB" id="Q9UBR1"/>
<dbReference type="TreeFam" id="TF313402"/>
<dbReference type="BioCyc" id="MetaCyc:HS01953-MONOMER"/>
<dbReference type="BRENDA" id="3.5.1.6">
    <property type="organism ID" value="2681"/>
</dbReference>
<dbReference type="PathwayCommons" id="Q9UBR1"/>
<dbReference type="Reactome" id="R-HSA-73621">
    <property type="pathway name" value="Pyrimidine catabolism"/>
</dbReference>
<dbReference type="SABIO-RK" id="Q9UBR1"/>
<dbReference type="UniPathway" id="UPA00131"/>
<dbReference type="BioGRID-ORCS" id="51733">
    <property type="hits" value="9 hits in 1149 CRISPR screens"/>
</dbReference>
<dbReference type="ChiTaRS" id="UPB1">
    <property type="organism name" value="human"/>
</dbReference>
<dbReference type="GeneWiki" id="UPB1"/>
<dbReference type="GenomeRNAi" id="51733"/>
<dbReference type="Pharos" id="Q9UBR1">
    <property type="development level" value="Tbio"/>
</dbReference>
<dbReference type="PRO" id="PR:Q9UBR1"/>
<dbReference type="Proteomes" id="UP000005640">
    <property type="component" value="Chromosome 22"/>
</dbReference>
<dbReference type="RNAct" id="Q9UBR1">
    <property type="molecule type" value="protein"/>
</dbReference>
<dbReference type="Bgee" id="ENSG00000100024">
    <property type="expression patterns" value="Expressed in right lobe of liver and 165 other cell types or tissues"/>
</dbReference>
<dbReference type="ExpressionAtlas" id="Q9UBR1">
    <property type="expression patterns" value="baseline and differential"/>
</dbReference>
<dbReference type="GO" id="GO:0005829">
    <property type="term" value="C:cytosol"/>
    <property type="evidence" value="ECO:0000304"/>
    <property type="project" value="Reactome"/>
</dbReference>
<dbReference type="GO" id="GO:0070062">
    <property type="term" value="C:extracellular exosome"/>
    <property type="evidence" value="ECO:0007005"/>
    <property type="project" value="UniProtKB"/>
</dbReference>
<dbReference type="GO" id="GO:0003837">
    <property type="term" value="F:beta-ureidopropionase activity"/>
    <property type="evidence" value="ECO:0000314"/>
    <property type="project" value="UniProtKB"/>
</dbReference>
<dbReference type="GO" id="GO:0042803">
    <property type="term" value="F:protein homodimerization activity"/>
    <property type="evidence" value="ECO:0000314"/>
    <property type="project" value="UniProtKB"/>
</dbReference>
<dbReference type="GO" id="GO:0033396">
    <property type="term" value="P:beta-alanine biosynthetic process via 3-ureidopropionate"/>
    <property type="evidence" value="ECO:0000314"/>
    <property type="project" value="UniProtKB"/>
</dbReference>
<dbReference type="GO" id="GO:0006248">
    <property type="term" value="P:CMP catabolic process"/>
    <property type="evidence" value="ECO:0007669"/>
    <property type="project" value="Ensembl"/>
</dbReference>
<dbReference type="GO" id="GO:0006249">
    <property type="term" value="P:dCMP catabolic process"/>
    <property type="evidence" value="ECO:0007669"/>
    <property type="project" value="Ensembl"/>
</dbReference>
<dbReference type="GO" id="GO:0046079">
    <property type="term" value="P:dUMP catabolic process"/>
    <property type="evidence" value="ECO:0007669"/>
    <property type="project" value="Ensembl"/>
</dbReference>
<dbReference type="GO" id="GO:0001701">
    <property type="term" value="P:in utero embryonic development"/>
    <property type="evidence" value="ECO:0007669"/>
    <property type="project" value="Ensembl"/>
</dbReference>
<dbReference type="GO" id="GO:0001889">
    <property type="term" value="P:liver development"/>
    <property type="evidence" value="ECO:0007669"/>
    <property type="project" value="Ensembl"/>
</dbReference>
<dbReference type="GO" id="GO:0051260">
    <property type="term" value="P:protein homooligomerization"/>
    <property type="evidence" value="ECO:0000314"/>
    <property type="project" value="UniProtKB"/>
</dbReference>
<dbReference type="GO" id="GO:0051289">
    <property type="term" value="P:protein homotetramerization"/>
    <property type="evidence" value="ECO:0000314"/>
    <property type="project" value="UniProtKB"/>
</dbReference>
<dbReference type="GO" id="GO:0046135">
    <property type="term" value="P:pyrimidine nucleoside catabolic process"/>
    <property type="evidence" value="ECO:0000315"/>
    <property type="project" value="UniProtKB"/>
</dbReference>
<dbReference type="GO" id="GO:0046050">
    <property type="term" value="P:UMP catabolic process"/>
    <property type="evidence" value="ECO:0007669"/>
    <property type="project" value="Ensembl"/>
</dbReference>
<dbReference type="CDD" id="cd07587">
    <property type="entry name" value="ML_beta-AS"/>
    <property type="match status" value="1"/>
</dbReference>
<dbReference type="FunFam" id="3.60.110.10:FF:000009">
    <property type="entry name" value="Beta-ureidopropionase 1"/>
    <property type="match status" value="1"/>
</dbReference>
<dbReference type="Gene3D" id="3.60.110.10">
    <property type="entry name" value="Carbon-nitrogen hydrolase"/>
    <property type="match status" value="1"/>
</dbReference>
<dbReference type="InterPro" id="IPR050345">
    <property type="entry name" value="Aliph_Amidase/BUP"/>
</dbReference>
<dbReference type="InterPro" id="IPR003010">
    <property type="entry name" value="C-N_Hydrolase"/>
</dbReference>
<dbReference type="InterPro" id="IPR036526">
    <property type="entry name" value="C-N_Hydrolase_sf"/>
</dbReference>
<dbReference type="PANTHER" id="PTHR43674:SF2">
    <property type="entry name" value="BETA-UREIDOPROPIONASE"/>
    <property type="match status" value="1"/>
</dbReference>
<dbReference type="PANTHER" id="PTHR43674">
    <property type="entry name" value="NITRILASE C965.09-RELATED"/>
    <property type="match status" value="1"/>
</dbReference>
<dbReference type="Pfam" id="PF00795">
    <property type="entry name" value="CN_hydrolase"/>
    <property type="match status" value="1"/>
</dbReference>
<dbReference type="SUPFAM" id="SSF56317">
    <property type="entry name" value="Carbon-nitrogen hydrolase"/>
    <property type="match status" value="1"/>
</dbReference>
<dbReference type="PROSITE" id="PS50263">
    <property type="entry name" value="CN_HYDROLASE"/>
    <property type="match status" value="1"/>
</dbReference>
<organism>
    <name type="scientific">Homo sapiens</name>
    <name type="common">Human</name>
    <dbReference type="NCBI Taxonomy" id="9606"/>
    <lineage>
        <taxon>Eukaryota</taxon>
        <taxon>Metazoa</taxon>
        <taxon>Chordata</taxon>
        <taxon>Craniata</taxon>
        <taxon>Vertebrata</taxon>
        <taxon>Euteleostomi</taxon>
        <taxon>Mammalia</taxon>
        <taxon>Eutheria</taxon>
        <taxon>Euarchontoglires</taxon>
        <taxon>Primates</taxon>
        <taxon>Haplorrhini</taxon>
        <taxon>Catarrhini</taxon>
        <taxon>Hominidae</taxon>
        <taxon>Homo</taxon>
    </lineage>
</organism>
<gene>
    <name type="primary">UPB1</name>
    <name type="synonym">BUP1</name>
</gene>